<feature type="transit peptide" description="Chloroplast" evidence="2">
    <location>
        <begin position="1"/>
        <end position="71"/>
    </location>
</feature>
<feature type="chain" id="PRO_0000046035" description="DNA-directed RNA polymerase 3B, chloroplastic">
    <location>
        <begin position="72"/>
        <end position="977"/>
    </location>
</feature>
<feature type="active site" evidence="1">
    <location>
        <position position="678"/>
    </location>
</feature>
<feature type="active site" evidence="1">
    <location>
        <position position="753"/>
    </location>
</feature>
<feature type="active site" evidence="1">
    <location>
        <position position="910"/>
    </location>
</feature>
<protein>
    <recommendedName>
        <fullName>DNA-directed RNA polymerase 3B, chloroplastic</fullName>
        <ecNumber>2.7.7.6</ecNumber>
    </recommendedName>
    <alternativeName>
        <fullName>NictaRpoT3-tom</fullName>
    </alternativeName>
    <alternativeName>
        <fullName>T7 bacteriophage-type single subunit RNA polymerase 3B</fullName>
    </alternativeName>
</protein>
<name>RPO3B_TOBAC</name>
<reference key="1">
    <citation type="journal article" date="2002" name="Plant J.">
        <title>Six active phage-type RNA polymerase genes in Nicotiana tabacum.</title>
        <authorList>
            <person name="Hedtke B."/>
            <person name="Legen J."/>
            <person name="Weihe A."/>
            <person name="Herrmann R.G."/>
            <person name="Boerner T."/>
        </authorList>
    </citation>
    <scope>NUCLEOTIDE SEQUENCE [GENOMIC DNA / MRNA]</scope>
    <scope>SUBCELLULAR LOCATION</scope>
</reference>
<keyword id="KW-0150">Chloroplast</keyword>
<keyword id="KW-0240">DNA-directed RNA polymerase</keyword>
<keyword id="KW-0548">Nucleotidyltransferase</keyword>
<keyword id="KW-0934">Plastid</keyword>
<keyword id="KW-1185">Reference proteome</keyword>
<keyword id="KW-0804">Transcription</keyword>
<keyword id="KW-0808">Transferase</keyword>
<keyword id="KW-0809">Transit peptide</keyword>
<proteinExistence type="evidence at transcript level"/>
<sequence length="977" mass="111548">MASTASYSPSPTSQWRTQKLPKRFNFYVIHNQEFGKLSQSSSLSTSSFPKTLKLPVIHMPINNIQSQTTVCVSTDENLEELVNLQKIPNGFLNKESNKRVFIQDPPWVSSLFMNSLFVRAKQVQGVRREFREIERRRRYAMLRRRQIKAETEAWEQMVEEYRELEREMCEKKLAPNLPYVKKLLLGWFEPLRQAIEKEQNAETTVKHRAAFAPHIDSLPADKMAVIVMHKLMGLLMMGGKEERCVQVVQAAVQIGMAVENEVRIHNFLEKTKKLQKHMTGAQSQEDMSKETMILRKRVKSLIKRNRVVEVRKLMKSEEPESWGRDTQAKLGCRLLELLTETAYVQRPVDQSADTPPDIRPAFRHVFKIATRDPGKNIVKKYGVIECDPLVVAGVDRTVKQMMIPYVPMLVPPKKWRGYDKGGYLFLPSYLMRTHGSRRQQDAVRGVPTKQMQQVYEALDTLGSTKWRVNKRILNVVESIWAGGGNIAGLVDRKDVPIPELSNSDDIMEVKKWKWKVRKSKKINQELHSQRCDTELKLSVARKLKDEEGFYYPHNLDFRGRAYPMHPHLNHLSSDLCRGILEFAEGRPLGKSGLRWLKIHLASLYAGGVEKLCYDARLAFVENHIHDILDSANNPLNGNRWWLNAEDPFQCLAACINLSEALKSSSPHTVISHLPIHQDGSCNGLQHYAALGRDSMEAAAVNLVAGEKPADVYTEIALRVDHIIRGDSIKDPAIDPNALLAKLLIDQVDRKLVKQTVMTSVYGVTYVGAREQIKRRLEEKGLIDDDRLLFTASCYAAKVTLAALGELFQAARGTMTWLGDCAKVIALENQPVRWTTPLGLPVVQPYFKTQRHVIRTSLQILALQREGDAVEVRKQRTAFPPNFVHSLDGSHMMMTAVACRDAGLQFAGVHDSFWTHACDVDQMNRILREKFVELYSLPILEDLLENFQKSYPALTFPPLPKRGDFNLREVLESPYFFN</sequence>
<accession>Q8L6J1</accession>
<accession>Q8L6J6</accession>
<evidence type="ECO:0000250" key="1"/>
<evidence type="ECO:0000255" key="2"/>
<evidence type="ECO:0000255" key="3">
    <source>
        <dbReference type="PROSITE-ProRule" id="PRU10031"/>
    </source>
</evidence>
<evidence type="ECO:0000255" key="4">
    <source>
        <dbReference type="PROSITE-ProRule" id="PRU10032"/>
    </source>
</evidence>
<evidence type="ECO:0000269" key="5">
    <source>
    </source>
</evidence>
<evidence type="ECO:0000305" key="6"/>
<dbReference type="EC" id="2.7.7.6"/>
<dbReference type="EMBL" id="AJ416570">
    <property type="protein sequence ID" value="CAC95021.2"/>
    <property type="molecule type" value="mRNA"/>
</dbReference>
<dbReference type="EMBL" id="AJ416575">
    <property type="protein sequence ID" value="CAC95026.1"/>
    <property type="status" value="ALT_SEQ"/>
    <property type="molecule type" value="Genomic_DNA"/>
</dbReference>
<dbReference type="RefSeq" id="NP_001312292.1">
    <property type="nucleotide sequence ID" value="NM_001325363.1"/>
</dbReference>
<dbReference type="SMR" id="Q8L6J1"/>
<dbReference type="STRING" id="4097.Q8L6J1"/>
<dbReference type="PaxDb" id="4097-Q8L6J1"/>
<dbReference type="GeneID" id="107783504"/>
<dbReference type="KEGG" id="nta:107783504"/>
<dbReference type="OrthoDB" id="1220996at2759"/>
<dbReference type="Proteomes" id="UP000084051">
    <property type="component" value="Unplaced"/>
</dbReference>
<dbReference type="GO" id="GO:0009507">
    <property type="term" value="C:chloroplast"/>
    <property type="evidence" value="ECO:0007669"/>
    <property type="project" value="UniProtKB-SubCell"/>
</dbReference>
<dbReference type="GO" id="GO:0034245">
    <property type="term" value="C:mitochondrial DNA-directed RNA polymerase complex"/>
    <property type="evidence" value="ECO:0000318"/>
    <property type="project" value="GO_Central"/>
</dbReference>
<dbReference type="GO" id="GO:0003677">
    <property type="term" value="F:DNA binding"/>
    <property type="evidence" value="ECO:0007669"/>
    <property type="project" value="InterPro"/>
</dbReference>
<dbReference type="GO" id="GO:0003899">
    <property type="term" value="F:DNA-directed RNA polymerase activity"/>
    <property type="evidence" value="ECO:0000318"/>
    <property type="project" value="GO_Central"/>
</dbReference>
<dbReference type="GO" id="GO:0006390">
    <property type="term" value="P:mitochondrial transcription"/>
    <property type="evidence" value="ECO:0000318"/>
    <property type="project" value="GO_Central"/>
</dbReference>
<dbReference type="FunFam" id="1.10.1320.10:FF:000001">
    <property type="entry name" value="DNA-directed RNA polymerase"/>
    <property type="match status" value="1"/>
</dbReference>
<dbReference type="FunFam" id="1.10.150.20:FF:000027">
    <property type="entry name" value="DNA-directed RNA polymerase"/>
    <property type="match status" value="1"/>
</dbReference>
<dbReference type="FunFam" id="1.10.287.260:FF:000001">
    <property type="entry name" value="DNA-directed RNA polymerase"/>
    <property type="match status" value="1"/>
</dbReference>
<dbReference type="FunFam" id="1.10.287.280:FF:000001">
    <property type="entry name" value="DNA-directed RNA polymerase"/>
    <property type="match status" value="1"/>
</dbReference>
<dbReference type="Gene3D" id="1.10.287.260">
    <property type="match status" value="1"/>
</dbReference>
<dbReference type="Gene3D" id="1.10.287.280">
    <property type="match status" value="1"/>
</dbReference>
<dbReference type="Gene3D" id="1.10.150.20">
    <property type="entry name" value="5' to 3' exonuclease, C-terminal subdomain"/>
    <property type="match status" value="1"/>
</dbReference>
<dbReference type="Gene3D" id="1.10.1320.10">
    <property type="entry name" value="DNA-directed RNA polymerase, N-terminal domain"/>
    <property type="match status" value="1"/>
</dbReference>
<dbReference type="InterPro" id="IPR024075">
    <property type="entry name" value="DNA-dir_RNA_pol_helix_hairp_sf"/>
</dbReference>
<dbReference type="InterPro" id="IPR046950">
    <property type="entry name" value="DNA-dir_Rpol_C_phage-type"/>
</dbReference>
<dbReference type="InterPro" id="IPR002092">
    <property type="entry name" value="DNA-dir_Rpol_phage-type"/>
</dbReference>
<dbReference type="InterPro" id="IPR043502">
    <property type="entry name" value="DNA/RNA_pol_sf"/>
</dbReference>
<dbReference type="InterPro" id="IPR037159">
    <property type="entry name" value="RNA_POL_N_sf"/>
</dbReference>
<dbReference type="InterPro" id="IPR029262">
    <property type="entry name" value="RPOL_N"/>
</dbReference>
<dbReference type="PANTHER" id="PTHR10102:SF1">
    <property type="entry name" value="DNA-DIRECTED RNA POLYMERASE 3, CHLOROPLASTIC"/>
    <property type="match status" value="1"/>
</dbReference>
<dbReference type="PANTHER" id="PTHR10102">
    <property type="entry name" value="DNA-DIRECTED RNA POLYMERASE, MITOCHONDRIAL"/>
    <property type="match status" value="1"/>
</dbReference>
<dbReference type="Pfam" id="PF00940">
    <property type="entry name" value="RNA_pol"/>
    <property type="match status" value="1"/>
</dbReference>
<dbReference type="Pfam" id="PF14700">
    <property type="entry name" value="RPOL_N"/>
    <property type="match status" value="1"/>
</dbReference>
<dbReference type="SMART" id="SM01311">
    <property type="entry name" value="RPOL_N"/>
    <property type="match status" value="1"/>
</dbReference>
<dbReference type="SUPFAM" id="SSF56672">
    <property type="entry name" value="DNA/RNA polymerases"/>
    <property type="match status" value="1"/>
</dbReference>
<dbReference type="PROSITE" id="PS00900">
    <property type="entry name" value="RNA_POL_PHAGE_1"/>
    <property type="match status" value="1"/>
</dbReference>
<dbReference type="PROSITE" id="PS00489">
    <property type="entry name" value="RNA_POL_PHAGE_2"/>
    <property type="match status" value="1"/>
</dbReference>
<gene>
    <name type="primary">RPOT3-TOM</name>
</gene>
<organism>
    <name type="scientific">Nicotiana tabacum</name>
    <name type="common">Common tobacco</name>
    <dbReference type="NCBI Taxonomy" id="4097"/>
    <lineage>
        <taxon>Eukaryota</taxon>
        <taxon>Viridiplantae</taxon>
        <taxon>Streptophyta</taxon>
        <taxon>Embryophyta</taxon>
        <taxon>Tracheophyta</taxon>
        <taxon>Spermatophyta</taxon>
        <taxon>Magnoliopsida</taxon>
        <taxon>eudicotyledons</taxon>
        <taxon>Gunneridae</taxon>
        <taxon>Pentapetalae</taxon>
        <taxon>asterids</taxon>
        <taxon>lamiids</taxon>
        <taxon>Solanales</taxon>
        <taxon>Solanaceae</taxon>
        <taxon>Nicotianoideae</taxon>
        <taxon>Nicotianeae</taxon>
        <taxon>Nicotiana</taxon>
    </lineage>
</organism>
<comment type="function">
    <text>DNA-dependent RNA polymerase catalyzes the transcription of DNA into RNA using the four ribonucleoside triphosphates as substrates.</text>
</comment>
<comment type="catalytic activity">
    <reaction evidence="3 4">
        <text>RNA(n) + a ribonucleoside 5'-triphosphate = RNA(n+1) + diphosphate</text>
        <dbReference type="Rhea" id="RHEA:21248"/>
        <dbReference type="Rhea" id="RHEA-COMP:14527"/>
        <dbReference type="Rhea" id="RHEA-COMP:17342"/>
        <dbReference type="ChEBI" id="CHEBI:33019"/>
        <dbReference type="ChEBI" id="CHEBI:61557"/>
        <dbReference type="ChEBI" id="CHEBI:140395"/>
        <dbReference type="EC" id="2.7.7.6"/>
    </reaction>
</comment>
<comment type="subcellular location">
    <subcellularLocation>
        <location evidence="5">Plastid</location>
        <location evidence="5">Chloroplast</location>
    </subcellularLocation>
</comment>
<comment type="similarity">
    <text evidence="6">Belongs to the phage and mitochondrial RNA polymerase family.</text>
</comment>
<comment type="sequence caution" evidence="6">
    <conflict type="erroneous gene model prediction">
        <sequence resource="EMBL-CDS" id="CAC95026"/>
    </conflict>
</comment>